<dbReference type="EC" id="2.3.1.274" evidence="1"/>
<dbReference type="EMBL" id="AE000512">
    <property type="protein sequence ID" value="AAD35242.1"/>
    <property type="status" value="ALT_INIT"/>
    <property type="molecule type" value="Genomic_DNA"/>
</dbReference>
<dbReference type="PIR" id="C72412">
    <property type="entry name" value="C72412"/>
</dbReference>
<dbReference type="RefSeq" id="NP_227964.1">
    <property type="nucleotide sequence ID" value="NC_000853.1"/>
</dbReference>
<dbReference type="RefSeq" id="WP_004082759.1">
    <property type="nucleotide sequence ID" value="NZ_CP011107.1"/>
</dbReference>
<dbReference type="SMR" id="Q9WXZ6"/>
<dbReference type="FunCoup" id="Q9WXZ6">
    <property type="interactions" value="259"/>
</dbReference>
<dbReference type="STRING" id="243274.TM_0149"/>
<dbReference type="PaxDb" id="243274-THEMA_04055"/>
<dbReference type="EnsemblBacteria" id="AAD35242">
    <property type="protein sequence ID" value="AAD35242"/>
    <property type="gene ID" value="TM_0149"/>
</dbReference>
<dbReference type="KEGG" id="tma:TM0149"/>
<dbReference type="KEGG" id="tmi:THEMA_04055"/>
<dbReference type="KEGG" id="tmm:Tmari_0147"/>
<dbReference type="KEGG" id="tmw:THMA_0145"/>
<dbReference type="PATRIC" id="fig|243274.5.peg.148"/>
<dbReference type="eggNOG" id="COG0416">
    <property type="taxonomic scope" value="Bacteria"/>
</dbReference>
<dbReference type="InParanoid" id="Q9WXZ6"/>
<dbReference type="OrthoDB" id="9806408at2"/>
<dbReference type="UniPathway" id="UPA00085"/>
<dbReference type="Proteomes" id="UP000008183">
    <property type="component" value="Chromosome"/>
</dbReference>
<dbReference type="GO" id="GO:0005737">
    <property type="term" value="C:cytoplasm"/>
    <property type="evidence" value="ECO:0007669"/>
    <property type="project" value="UniProtKB-SubCell"/>
</dbReference>
<dbReference type="GO" id="GO:0043811">
    <property type="term" value="F:phosphate:acyl-[acyl carrier protein] acyltransferase activity"/>
    <property type="evidence" value="ECO:0007669"/>
    <property type="project" value="UniProtKB-UniRule"/>
</dbReference>
<dbReference type="GO" id="GO:0006633">
    <property type="term" value="P:fatty acid biosynthetic process"/>
    <property type="evidence" value="ECO:0007669"/>
    <property type="project" value="UniProtKB-UniRule"/>
</dbReference>
<dbReference type="GO" id="GO:0008654">
    <property type="term" value="P:phospholipid biosynthetic process"/>
    <property type="evidence" value="ECO:0007669"/>
    <property type="project" value="UniProtKB-KW"/>
</dbReference>
<dbReference type="Gene3D" id="3.40.718.10">
    <property type="entry name" value="Isopropylmalate Dehydrogenase"/>
    <property type="match status" value="1"/>
</dbReference>
<dbReference type="HAMAP" id="MF_00019">
    <property type="entry name" value="PlsX"/>
    <property type="match status" value="1"/>
</dbReference>
<dbReference type="InterPro" id="IPR003664">
    <property type="entry name" value="FA_synthesis"/>
</dbReference>
<dbReference type="InterPro" id="IPR012281">
    <property type="entry name" value="Phospholipid_synth_PlsX-like"/>
</dbReference>
<dbReference type="NCBIfam" id="TIGR00182">
    <property type="entry name" value="plsX"/>
    <property type="match status" value="1"/>
</dbReference>
<dbReference type="PANTHER" id="PTHR30100">
    <property type="entry name" value="FATTY ACID/PHOSPHOLIPID SYNTHESIS PROTEIN PLSX"/>
    <property type="match status" value="1"/>
</dbReference>
<dbReference type="PANTHER" id="PTHR30100:SF1">
    <property type="entry name" value="PHOSPHATE ACYLTRANSFERASE"/>
    <property type="match status" value="1"/>
</dbReference>
<dbReference type="Pfam" id="PF02504">
    <property type="entry name" value="FA_synthesis"/>
    <property type="match status" value="1"/>
</dbReference>
<dbReference type="PIRSF" id="PIRSF002465">
    <property type="entry name" value="Phsphlp_syn_PlsX"/>
    <property type="match status" value="1"/>
</dbReference>
<dbReference type="SUPFAM" id="SSF53659">
    <property type="entry name" value="Isocitrate/Isopropylmalate dehydrogenase-like"/>
    <property type="match status" value="1"/>
</dbReference>
<sequence length="327" mass="34609">MKIAIDVMGGDRAPDEILKGALLASKEVEGEIVLIGPEEIVKNKGLPFVSASEIVKMDDPPLEVLRKKNSSMHMGLKLLSEGKVDAFVSAGATGPLFLGATSIVGKLEGIERPALGVAVPSLKGATVLIDAGANAKVRPEHLVDFAFMGIAYSKVLGAENPRVGLLNMGSEENKGPDDIKRAYQLLKEFLGDTFFGNVEGHDINLGTVDVVVADGFSGNVALKTMEGTAKLVTSVLKESIKDGGFLSLLGALLMKRSFDKMKEKLDPRSYGGTFILGVKGIVVKAHGSSDAKAIKHAIKVAEKGIRVNIVQEIERGISHVRNSGDGR</sequence>
<evidence type="ECO:0000255" key="1">
    <source>
        <dbReference type="HAMAP-Rule" id="MF_00019"/>
    </source>
</evidence>
<evidence type="ECO:0000305" key="2"/>
<proteinExistence type="inferred from homology"/>
<keyword id="KW-0963">Cytoplasm</keyword>
<keyword id="KW-0444">Lipid biosynthesis</keyword>
<keyword id="KW-0443">Lipid metabolism</keyword>
<keyword id="KW-0594">Phospholipid biosynthesis</keyword>
<keyword id="KW-1208">Phospholipid metabolism</keyword>
<keyword id="KW-1185">Reference proteome</keyword>
<keyword id="KW-0808">Transferase</keyword>
<reference key="1">
    <citation type="journal article" date="1999" name="Nature">
        <title>Evidence for lateral gene transfer between Archaea and Bacteria from genome sequence of Thermotoga maritima.</title>
        <authorList>
            <person name="Nelson K.E."/>
            <person name="Clayton R.A."/>
            <person name="Gill S.R."/>
            <person name="Gwinn M.L."/>
            <person name="Dodson R.J."/>
            <person name="Haft D.H."/>
            <person name="Hickey E.K."/>
            <person name="Peterson J.D."/>
            <person name="Nelson W.C."/>
            <person name="Ketchum K.A."/>
            <person name="McDonald L.A."/>
            <person name="Utterback T.R."/>
            <person name="Malek J.A."/>
            <person name="Linher K.D."/>
            <person name="Garrett M.M."/>
            <person name="Stewart A.M."/>
            <person name="Cotton M.D."/>
            <person name="Pratt M.S."/>
            <person name="Phillips C.A."/>
            <person name="Richardson D.L."/>
            <person name="Heidelberg J.F."/>
            <person name="Sutton G.G."/>
            <person name="Fleischmann R.D."/>
            <person name="Eisen J.A."/>
            <person name="White O."/>
            <person name="Salzberg S.L."/>
            <person name="Smith H.O."/>
            <person name="Venter J.C."/>
            <person name="Fraser C.M."/>
        </authorList>
    </citation>
    <scope>NUCLEOTIDE SEQUENCE [LARGE SCALE GENOMIC DNA]</scope>
    <source>
        <strain>ATCC 43589 / DSM 3109 / JCM 10099 / NBRC 100826 / MSB8</strain>
    </source>
</reference>
<gene>
    <name evidence="1" type="primary">plsX</name>
    <name type="ordered locus">TM_0149</name>
</gene>
<comment type="function">
    <text evidence="1">Catalyzes the reversible formation of acyl-phosphate (acyl-PO(4)) from acyl-[acyl-carrier-protein] (acyl-ACP). This enzyme utilizes acyl-ACP as fatty acyl donor, but not acyl-CoA.</text>
</comment>
<comment type="catalytic activity">
    <reaction evidence="1">
        <text>a fatty acyl-[ACP] + phosphate = an acyl phosphate + holo-[ACP]</text>
        <dbReference type="Rhea" id="RHEA:42292"/>
        <dbReference type="Rhea" id="RHEA-COMP:9685"/>
        <dbReference type="Rhea" id="RHEA-COMP:14125"/>
        <dbReference type="ChEBI" id="CHEBI:43474"/>
        <dbReference type="ChEBI" id="CHEBI:59918"/>
        <dbReference type="ChEBI" id="CHEBI:64479"/>
        <dbReference type="ChEBI" id="CHEBI:138651"/>
        <dbReference type="EC" id="2.3.1.274"/>
    </reaction>
</comment>
<comment type="pathway">
    <text evidence="1">Lipid metabolism; phospholipid metabolism.</text>
</comment>
<comment type="subunit">
    <text evidence="1">Homodimer. Probably interacts with PlsY.</text>
</comment>
<comment type="subcellular location">
    <subcellularLocation>
        <location evidence="1">Cytoplasm</location>
    </subcellularLocation>
    <text evidence="1">Associated with the membrane possibly through PlsY.</text>
</comment>
<comment type="similarity">
    <text evidence="1">Belongs to the PlsX family.</text>
</comment>
<comment type="sequence caution" evidence="2">
    <conflict type="erroneous initiation">
        <sequence resource="EMBL-CDS" id="AAD35242"/>
    </conflict>
</comment>
<feature type="chain" id="PRO_0000189957" description="Phosphate acyltransferase">
    <location>
        <begin position="1"/>
        <end position="327"/>
    </location>
</feature>
<protein>
    <recommendedName>
        <fullName evidence="1">Phosphate acyltransferase</fullName>
        <ecNumber evidence="1">2.3.1.274</ecNumber>
    </recommendedName>
    <alternativeName>
        <fullName evidence="1">Acyl-ACP phosphotransacylase</fullName>
    </alternativeName>
    <alternativeName>
        <fullName evidence="1">Acyl-[acyl-carrier-protein]--phosphate acyltransferase</fullName>
    </alternativeName>
    <alternativeName>
        <fullName evidence="1">Phosphate-acyl-ACP acyltransferase</fullName>
    </alternativeName>
</protein>
<name>PLSX_THEMA</name>
<organism>
    <name type="scientific">Thermotoga maritima (strain ATCC 43589 / DSM 3109 / JCM 10099 / NBRC 100826 / MSB8)</name>
    <dbReference type="NCBI Taxonomy" id="243274"/>
    <lineage>
        <taxon>Bacteria</taxon>
        <taxon>Thermotogati</taxon>
        <taxon>Thermotogota</taxon>
        <taxon>Thermotogae</taxon>
        <taxon>Thermotogales</taxon>
        <taxon>Thermotogaceae</taxon>
        <taxon>Thermotoga</taxon>
    </lineage>
</organism>
<accession>Q9WXZ6</accession>